<comment type="function">
    <text evidence="1">Allows the formation of correctly charged Asn-tRNA(Asn) or Gln-tRNA(Gln) through the transamidation of misacylated Asp-tRNA(Asn) or Glu-tRNA(Gln) in organisms which lack either or both of asparaginyl-tRNA or glutaminyl-tRNA synthetases. The reaction takes place in the presence of glutamine and ATP through an activated phospho-Asp-tRNA(Asn) or phospho-Glu-tRNA(Gln).</text>
</comment>
<comment type="catalytic activity">
    <reaction evidence="1">
        <text>L-glutamyl-tRNA(Gln) + L-glutamine + ATP + H2O = L-glutaminyl-tRNA(Gln) + L-glutamate + ADP + phosphate + H(+)</text>
        <dbReference type="Rhea" id="RHEA:17521"/>
        <dbReference type="Rhea" id="RHEA-COMP:9681"/>
        <dbReference type="Rhea" id="RHEA-COMP:9684"/>
        <dbReference type="ChEBI" id="CHEBI:15377"/>
        <dbReference type="ChEBI" id="CHEBI:15378"/>
        <dbReference type="ChEBI" id="CHEBI:29985"/>
        <dbReference type="ChEBI" id="CHEBI:30616"/>
        <dbReference type="ChEBI" id="CHEBI:43474"/>
        <dbReference type="ChEBI" id="CHEBI:58359"/>
        <dbReference type="ChEBI" id="CHEBI:78520"/>
        <dbReference type="ChEBI" id="CHEBI:78521"/>
        <dbReference type="ChEBI" id="CHEBI:456216"/>
    </reaction>
</comment>
<comment type="catalytic activity">
    <reaction evidence="1">
        <text>L-aspartyl-tRNA(Asn) + L-glutamine + ATP + H2O = L-asparaginyl-tRNA(Asn) + L-glutamate + ADP + phosphate + 2 H(+)</text>
        <dbReference type="Rhea" id="RHEA:14513"/>
        <dbReference type="Rhea" id="RHEA-COMP:9674"/>
        <dbReference type="Rhea" id="RHEA-COMP:9677"/>
        <dbReference type="ChEBI" id="CHEBI:15377"/>
        <dbReference type="ChEBI" id="CHEBI:15378"/>
        <dbReference type="ChEBI" id="CHEBI:29985"/>
        <dbReference type="ChEBI" id="CHEBI:30616"/>
        <dbReference type="ChEBI" id="CHEBI:43474"/>
        <dbReference type="ChEBI" id="CHEBI:58359"/>
        <dbReference type="ChEBI" id="CHEBI:78515"/>
        <dbReference type="ChEBI" id="CHEBI:78516"/>
        <dbReference type="ChEBI" id="CHEBI:456216"/>
    </reaction>
</comment>
<comment type="subunit">
    <text evidence="1">Heterotrimer of A, B and C subunits.</text>
</comment>
<comment type="similarity">
    <text evidence="1">Belongs to the GatC family.</text>
</comment>
<evidence type="ECO:0000255" key="1">
    <source>
        <dbReference type="HAMAP-Rule" id="MF_00122"/>
    </source>
</evidence>
<accession>Q03J80</accession>
<keyword id="KW-0067">ATP-binding</keyword>
<keyword id="KW-0436">Ligase</keyword>
<keyword id="KW-0547">Nucleotide-binding</keyword>
<keyword id="KW-0648">Protein biosynthesis</keyword>
<name>GATC_STRTD</name>
<reference key="1">
    <citation type="journal article" date="2006" name="Proc. Natl. Acad. Sci. U.S.A.">
        <title>Comparative genomics of the lactic acid bacteria.</title>
        <authorList>
            <person name="Makarova K.S."/>
            <person name="Slesarev A."/>
            <person name="Wolf Y.I."/>
            <person name="Sorokin A."/>
            <person name="Mirkin B."/>
            <person name="Koonin E.V."/>
            <person name="Pavlov A."/>
            <person name="Pavlova N."/>
            <person name="Karamychev V."/>
            <person name="Polouchine N."/>
            <person name="Shakhova V."/>
            <person name="Grigoriev I."/>
            <person name="Lou Y."/>
            <person name="Rohksar D."/>
            <person name="Lucas S."/>
            <person name="Huang K."/>
            <person name="Goodstein D.M."/>
            <person name="Hawkins T."/>
            <person name="Plengvidhya V."/>
            <person name="Welker D."/>
            <person name="Hughes J."/>
            <person name="Goh Y."/>
            <person name="Benson A."/>
            <person name="Baldwin K."/>
            <person name="Lee J.-H."/>
            <person name="Diaz-Muniz I."/>
            <person name="Dosti B."/>
            <person name="Smeianov V."/>
            <person name="Wechter W."/>
            <person name="Barabote R."/>
            <person name="Lorca G."/>
            <person name="Altermann E."/>
            <person name="Barrangou R."/>
            <person name="Ganesan B."/>
            <person name="Xie Y."/>
            <person name="Rawsthorne H."/>
            <person name="Tamir D."/>
            <person name="Parker C."/>
            <person name="Breidt F."/>
            <person name="Broadbent J.R."/>
            <person name="Hutkins R."/>
            <person name="O'Sullivan D."/>
            <person name="Steele J."/>
            <person name="Unlu G."/>
            <person name="Saier M.H. Jr."/>
            <person name="Klaenhammer T."/>
            <person name="Richardson P."/>
            <person name="Kozyavkin S."/>
            <person name="Weimer B.C."/>
            <person name="Mills D.A."/>
        </authorList>
    </citation>
    <scope>NUCLEOTIDE SEQUENCE [LARGE SCALE GENOMIC DNA]</scope>
    <source>
        <strain>ATCC BAA-491 / LMD-9</strain>
    </source>
</reference>
<dbReference type="EC" id="6.3.5.-" evidence="1"/>
<dbReference type="EMBL" id="CP000419">
    <property type="protein sequence ID" value="ABJ66742.1"/>
    <property type="molecule type" value="Genomic_DNA"/>
</dbReference>
<dbReference type="RefSeq" id="WP_002884769.1">
    <property type="nucleotide sequence ID" value="NZ_CP086001.1"/>
</dbReference>
<dbReference type="SMR" id="Q03J80"/>
<dbReference type="GeneID" id="66899374"/>
<dbReference type="KEGG" id="ste:STER_1592"/>
<dbReference type="HOGENOM" id="CLU_105899_1_2_9"/>
<dbReference type="GO" id="GO:0050566">
    <property type="term" value="F:asparaginyl-tRNA synthase (glutamine-hydrolyzing) activity"/>
    <property type="evidence" value="ECO:0007669"/>
    <property type="project" value="RHEA"/>
</dbReference>
<dbReference type="GO" id="GO:0005524">
    <property type="term" value="F:ATP binding"/>
    <property type="evidence" value="ECO:0007669"/>
    <property type="project" value="UniProtKB-KW"/>
</dbReference>
<dbReference type="GO" id="GO:0050567">
    <property type="term" value="F:glutaminyl-tRNA synthase (glutamine-hydrolyzing) activity"/>
    <property type="evidence" value="ECO:0007669"/>
    <property type="project" value="UniProtKB-UniRule"/>
</dbReference>
<dbReference type="GO" id="GO:0070681">
    <property type="term" value="P:glutaminyl-tRNAGln biosynthesis via transamidation"/>
    <property type="evidence" value="ECO:0007669"/>
    <property type="project" value="TreeGrafter"/>
</dbReference>
<dbReference type="GO" id="GO:0006450">
    <property type="term" value="P:regulation of translational fidelity"/>
    <property type="evidence" value="ECO:0007669"/>
    <property type="project" value="InterPro"/>
</dbReference>
<dbReference type="GO" id="GO:0006412">
    <property type="term" value="P:translation"/>
    <property type="evidence" value="ECO:0007669"/>
    <property type="project" value="UniProtKB-UniRule"/>
</dbReference>
<dbReference type="Gene3D" id="1.10.20.60">
    <property type="entry name" value="Glu-tRNAGln amidotransferase C subunit, N-terminal domain"/>
    <property type="match status" value="1"/>
</dbReference>
<dbReference type="HAMAP" id="MF_00122">
    <property type="entry name" value="GatC"/>
    <property type="match status" value="1"/>
</dbReference>
<dbReference type="InterPro" id="IPR036113">
    <property type="entry name" value="Asp/Glu-ADT_sf_sub_c"/>
</dbReference>
<dbReference type="InterPro" id="IPR003837">
    <property type="entry name" value="GatC"/>
</dbReference>
<dbReference type="NCBIfam" id="TIGR00135">
    <property type="entry name" value="gatC"/>
    <property type="match status" value="1"/>
</dbReference>
<dbReference type="PANTHER" id="PTHR15004">
    <property type="entry name" value="GLUTAMYL-TRNA(GLN) AMIDOTRANSFERASE SUBUNIT C, MITOCHONDRIAL"/>
    <property type="match status" value="1"/>
</dbReference>
<dbReference type="PANTHER" id="PTHR15004:SF0">
    <property type="entry name" value="GLUTAMYL-TRNA(GLN) AMIDOTRANSFERASE SUBUNIT C, MITOCHONDRIAL"/>
    <property type="match status" value="1"/>
</dbReference>
<dbReference type="Pfam" id="PF02686">
    <property type="entry name" value="GatC"/>
    <property type="match status" value="1"/>
</dbReference>
<dbReference type="SUPFAM" id="SSF141000">
    <property type="entry name" value="Glu-tRNAGln amidotransferase C subunit"/>
    <property type="match status" value="1"/>
</dbReference>
<protein>
    <recommendedName>
        <fullName evidence="1">Aspartyl/glutamyl-tRNA(Asn/Gln) amidotransferase subunit C</fullName>
        <shortName evidence="1">Asp/Glu-ADT subunit C</shortName>
        <ecNumber evidence="1">6.3.5.-</ecNumber>
    </recommendedName>
</protein>
<sequence>MKITQEEVTHVANLSKLKFSPEETAEFATTLSKIVDMVELLEEVDTTGVAPTTTMADRKTVLRPDVAEKGTDRDRLFKNVPEKDNYYIKVPAILEDGGDA</sequence>
<feature type="chain" id="PRO_1000016226" description="Aspartyl/glutamyl-tRNA(Asn/Gln) amidotransferase subunit C">
    <location>
        <begin position="1"/>
        <end position="100"/>
    </location>
</feature>
<organism>
    <name type="scientific">Streptococcus thermophilus (strain ATCC BAA-491 / LMD-9)</name>
    <dbReference type="NCBI Taxonomy" id="322159"/>
    <lineage>
        <taxon>Bacteria</taxon>
        <taxon>Bacillati</taxon>
        <taxon>Bacillota</taxon>
        <taxon>Bacilli</taxon>
        <taxon>Lactobacillales</taxon>
        <taxon>Streptococcaceae</taxon>
        <taxon>Streptococcus</taxon>
    </lineage>
</organism>
<proteinExistence type="inferred from homology"/>
<gene>
    <name evidence="1" type="primary">gatC</name>
    <name type="ordered locus">STER_1592</name>
</gene>